<proteinExistence type="inferred from homology"/>
<dbReference type="EC" id="2.7.1.30" evidence="1"/>
<dbReference type="EMBL" id="AB015974">
    <property type="protein sequence ID" value="BAA31995.1"/>
    <property type="molecule type" value="Genomic_DNA"/>
</dbReference>
<dbReference type="SMR" id="O87924"/>
<dbReference type="UniPathway" id="UPA00618">
    <property type="reaction ID" value="UER00672"/>
</dbReference>
<dbReference type="GO" id="GO:0005829">
    <property type="term" value="C:cytosol"/>
    <property type="evidence" value="ECO:0007669"/>
    <property type="project" value="TreeGrafter"/>
</dbReference>
<dbReference type="GO" id="GO:0005524">
    <property type="term" value="F:ATP binding"/>
    <property type="evidence" value="ECO:0007669"/>
    <property type="project" value="UniProtKB-UniRule"/>
</dbReference>
<dbReference type="GO" id="GO:0004370">
    <property type="term" value="F:glycerol kinase activity"/>
    <property type="evidence" value="ECO:0000250"/>
    <property type="project" value="UniProtKB"/>
</dbReference>
<dbReference type="GO" id="GO:0019563">
    <property type="term" value="P:glycerol catabolic process"/>
    <property type="evidence" value="ECO:0007669"/>
    <property type="project" value="UniProtKB-UniRule"/>
</dbReference>
<dbReference type="GO" id="GO:0006071">
    <property type="term" value="P:glycerol metabolic process"/>
    <property type="evidence" value="ECO:0000250"/>
    <property type="project" value="UniProtKB"/>
</dbReference>
<dbReference type="GO" id="GO:0006072">
    <property type="term" value="P:glycerol-3-phosphate metabolic process"/>
    <property type="evidence" value="ECO:0007669"/>
    <property type="project" value="InterPro"/>
</dbReference>
<dbReference type="CDD" id="cd07786">
    <property type="entry name" value="FGGY_EcGK_like"/>
    <property type="match status" value="1"/>
</dbReference>
<dbReference type="FunFam" id="3.30.420.40:FF:000007">
    <property type="entry name" value="Glycerol kinase"/>
    <property type="match status" value="1"/>
</dbReference>
<dbReference type="FunFam" id="3.30.420.40:FF:000008">
    <property type="entry name" value="Glycerol kinase"/>
    <property type="match status" value="1"/>
</dbReference>
<dbReference type="Gene3D" id="3.30.420.40">
    <property type="match status" value="2"/>
</dbReference>
<dbReference type="HAMAP" id="MF_00186">
    <property type="entry name" value="Glycerol_kin"/>
    <property type="match status" value="1"/>
</dbReference>
<dbReference type="InterPro" id="IPR043129">
    <property type="entry name" value="ATPase_NBD"/>
</dbReference>
<dbReference type="InterPro" id="IPR000577">
    <property type="entry name" value="Carb_kinase_FGGY"/>
</dbReference>
<dbReference type="InterPro" id="IPR018483">
    <property type="entry name" value="Carb_kinase_FGGY_CS"/>
</dbReference>
<dbReference type="InterPro" id="IPR018485">
    <property type="entry name" value="FGGY_C"/>
</dbReference>
<dbReference type="InterPro" id="IPR018484">
    <property type="entry name" value="FGGY_N"/>
</dbReference>
<dbReference type="InterPro" id="IPR005999">
    <property type="entry name" value="Glycerol_kin"/>
</dbReference>
<dbReference type="NCBIfam" id="TIGR01311">
    <property type="entry name" value="glycerol_kin"/>
    <property type="match status" value="1"/>
</dbReference>
<dbReference type="NCBIfam" id="NF000756">
    <property type="entry name" value="PRK00047.1"/>
    <property type="match status" value="1"/>
</dbReference>
<dbReference type="PANTHER" id="PTHR10196:SF69">
    <property type="entry name" value="GLYCEROL KINASE"/>
    <property type="match status" value="1"/>
</dbReference>
<dbReference type="PANTHER" id="PTHR10196">
    <property type="entry name" value="SUGAR KINASE"/>
    <property type="match status" value="1"/>
</dbReference>
<dbReference type="Pfam" id="PF02782">
    <property type="entry name" value="FGGY_C"/>
    <property type="match status" value="1"/>
</dbReference>
<dbReference type="Pfam" id="PF00370">
    <property type="entry name" value="FGGY_N"/>
    <property type="match status" value="1"/>
</dbReference>
<dbReference type="PIRSF" id="PIRSF000538">
    <property type="entry name" value="GlpK"/>
    <property type="match status" value="1"/>
</dbReference>
<dbReference type="SUPFAM" id="SSF53067">
    <property type="entry name" value="Actin-like ATPase domain"/>
    <property type="match status" value="2"/>
</dbReference>
<dbReference type="PROSITE" id="PS00933">
    <property type="entry name" value="FGGY_KINASES_1"/>
    <property type="match status" value="1"/>
</dbReference>
<dbReference type="PROSITE" id="PS00445">
    <property type="entry name" value="FGGY_KINASES_2"/>
    <property type="match status" value="1"/>
</dbReference>
<keyword id="KW-0067">ATP-binding</keyword>
<keyword id="KW-0319">Glycerol metabolism</keyword>
<keyword id="KW-0418">Kinase</keyword>
<keyword id="KW-0547">Nucleotide-binding</keyword>
<keyword id="KW-0808">Transferase</keyword>
<reference key="1">
    <citation type="submission" date="1998-07" db="EMBL/GenBank/DDBJ databases">
        <title>GlpK of Pseudomonas tolaasii.</title>
        <authorList>
            <person name="Murata H."/>
        </authorList>
    </citation>
    <scope>NUCLEOTIDE SEQUENCE [GENOMIC DNA]</scope>
    <source>
        <strain>PT814</strain>
    </source>
</reference>
<gene>
    <name evidence="1" type="primary">glpK</name>
</gene>
<organism>
    <name type="scientific">Pseudomonas tolaasii</name>
    <dbReference type="NCBI Taxonomy" id="29442"/>
    <lineage>
        <taxon>Bacteria</taxon>
        <taxon>Pseudomonadati</taxon>
        <taxon>Pseudomonadota</taxon>
        <taxon>Gammaproteobacteria</taxon>
        <taxon>Pseudomonadales</taxon>
        <taxon>Pseudomonadaceae</taxon>
        <taxon>Pseudomonas</taxon>
    </lineage>
</organism>
<protein>
    <recommendedName>
        <fullName evidence="1">Glycerol kinase</fullName>
        <ecNumber evidence="1">2.7.1.30</ecNumber>
    </recommendedName>
    <alternativeName>
        <fullName evidence="1">ATP:glycerol 3-phosphotransferase</fullName>
    </alternativeName>
    <alternativeName>
        <fullName evidence="1">Glycerokinase</fullName>
        <shortName evidence="1">GK</shortName>
    </alternativeName>
</protein>
<sequence length="503" mass="55768">MTDIQNKNYIIALDQGTTSSRAIIFDRDANVVCTAQREFTQHYPQAGWVEHDPMEIFATQSAVMVEALAQAGLHHDQVAAIGITNQRETTVVWDKVTGRPIYNAIVWQCRRSTEIQICQQLKRDGHEQYINDTTGLVTDPYFSGTKLKWILDNVEGSRERARNGELLFGTIDSWLIWKFTGGKTHVTDYTNASRTMLFNIHTLEWDAKMLEILDVPREMLPEVKSSSEIYGRTKVASPSAAIAGDQQAALFGQMCVRGGQAKNTYGTGCFLLMNTGDKAVKSKHGMLTTIACGPRGEVAYALEGAVFNGGSTVQWLRDELKIIADATDTEYFAGKVKDSNGVYLVPAFTGLGAPYWDPYARGALFGLTRGVRVDHIIRAALESIAYQTRDVLDAMQQDSGERLKALRVDGGAVANNFLMQFQADILGTQVERPQMRETTALGAAYLAGLACGFWGSLEELRGKAVIEREFEPQLDEAAKEKLYAGWQKAVSRTRDWEPHEGAE</sequence>
<comment type="function">
    <text evidence="1">Key enzyme in the regulation of glycerol uptake and metabolism. Catalyzes the phosphorylation of glycerol to yield sn-glycerol 3-phosphate.</text>
</comment>
<comment type="catalytic activity">
    <reaction evidence="1">
        <text>glycerol + ATP = sn-glycerol 3-phosphate + ADP + H(+)</text>
        <dbReference type="Rhea" id="RHEA:21644"/>
        <dbReference type="ChEBI" id="CHEBI:15378"/>
        <dbReference type="ChEBI" id="CHEBI:17754"/>
        <dbReference type="ChEBI" id="CHEBI:30616"/>
        <dbReference type="ChEBI" id="CHEBI:57597"/>
        <dbReference type="ChEBI" id="CHEBI:456216"/>
        <dbReference type="EC" id="2.7.1.30"/>
    </reaction>
</comment>
<comment type="activity regulation">
    <text evidence="1">Inhibited by fructose 1,6-bisphosphate (FBP).</text>
</comment>
<comment type="pathway">
    <text evidence="1">Polyol metabolism; glycerol degradation via glycerol kinase pathway; sn-glycerol 3-phosphate from glycerol: step 1/1.</text>
</comment>
<comment type="similarity">
    <text evidence="1">Belongs to the FGGY kinase family.</text>
</comment>
<evidence type="ECO:0000255" key="1">
    <source>
        <dbReference type="HAMAP-Rule" id="MF_00186"/>
    </source>
</evidence>
<feature type="chain" id="PRO_0000059480" description="Glycerol kinase">
    <location>
        <begin position="1"/>
        <end position="503"/>
    </location>
</feature>
<feature type="binding site" evidence="1">
    <location>
        <position position="17"/>
    </location>
    <ligand>
        <name>ADP</name>
        <dbReference type="ChEBI" id="CHEBI:456216"/>
    </ligand>
</feature>
<feature type="binding site" evidence="1">
    <location>
        <position position="17"/>
    </location>
    <ligand>
        <name>ATP</name>
        <dbReference type="ChEBI" id="CHEBI:30616"/>
    </ligand>
</feature>
<feature type="binding site" evidence="1">
    <location>
        <position position="17"/>
    </location>
    <ligand>
        <name>sn-glycerol 3-phosphate</name>
        <dbReference type="ChEBI" id="CHEBI:57597"/>
    </ligand>
</feature>
<feature type="binding site" evidence="1">
    <location>
        <position position="18"/>
    </location>
    <ligand>
        <name>ATP</name>
        <dbReference type="ChEBI" id="CHEBI:30616"/>
    </ligand>
</feature>
<feature type="binding site" evidence="1">
    <location>
        <position position="19"/>
    </location>
    <ligand>
        <name>ATP</name>
        <dbReference type="ChEBI" id="CHEBI:30616"/>
    </ligand>
</feature>
<feature type="binding site" evidence="1">
    <location>
        <position position="21"/>
    </location>
    <ligand>
        <name>ADP</name>
        <dbReference type="ChEBI" id="CHEBI:456216"/>
    </ligand>
</feature>
<feature type="binding site" evidence="1">
    <location>
        <position position="87"/>
    </location>
    <ligand>
        <name>glycerol</name>
        <dbReference type="ChEBI" id="CHEBI:17754"/>
    </ligand>
</feature>
<feature type="binding site" evidence="1">
    <location>
        <position position="87"/>
    </location>
    <ligand>
        <name>sn-glycerol 3-phosphate</name>
        <dbReference type="ChEBI" id="CHEBI:57597"/>
    </ligand>
</feature>
<feature type="binding site" evidence="1">
    <location>
        <position position="88"/>
    </location>
    <ligand>
        <name>glycerol</name>
        <dbReference type="ChEBI" id="CHEBI:17754"/>
    </ligand>
</feature>
<feature type="binding site" evidence="1">
    <location>
        <position position="88"/>
    </location>
    <ligand>
        <name>sn-glycerol 3-phosphate</name>
        <dbReference type="ChEBI" id="CHEBI:57597"/>
    </ligand>
</feature>
<feature type="binding site" evidence="1">
    <location>
        <position position="141"/>
    </location>
    <ligand>
        <name>glycerol</name>
        <dbReference type="ChEBI" id="CHEBI:17754"/>
    </ligand>
</feature>
<feature type="binding site" evidence="1">
    <location>
        <position position="141"/>
    </location>
    <ligand>
        <name>sn-glycerol 3-phosphate</name>
        <dbReference type="ChEBI" id="CHEBI:57597"/>
    </ligand>
</feature>
<feature type="binding site" evidence="1">
    <location>
        <position position="245"/>
    </location>
    <ligand>
        <name>glycerol</name>
        <dbReference type="ChEBI" id="CHEBI:17754"/>
    </ligand>
</feature>
<feature type="binding site" evidence="1">
    <location>
        <position position="245"/>
    </location>
    <ligand>
        <name>sn-glycerol 3-phosphate</name>
        <dbReference type="ChEBI" id="CHEBI:57597"/>
    </ligand>
</feature>
<feature type="binding site" evidence="1">
    <location>
        <position position="246"/>
    </location>
    <ligand>
        <name>glycerol</name>
        <dbReference type="ChEBI" id="CHEBI:17754"/>
    </ligand>
</feature>
<feature type="binding site" evidence="1">
    <location>
        <position position="267"/>
    </location>
    <ligand>
        <name>ADP</name>
        <dbReference type="ChEBI" id="CHEBI:456216"/>
    </ligand>
</feature>
<feature type="binding site" evidence="1">
    <location>
        <position position="267"/>
    </location>
    <ligand>
        <name>ATP</name>
        <dbReference type="ChEBI" id="CHEBI:30616"/>
    </ligand>
</feature>
<feature type="binding site" evidence="1">
    <location>
        <position position="310"/>
    </location>
    <ligand>
        <name>ADP</name>
        <dbReference type="ChEBI" id="CHEBI:456216"/>
    </ligand>
</feature>
<feature type="binding site" evidence="1">
    <location>
        <position position="310"/>
    </location>
    <ligand>
        <name>ATP</name>
        <dbReference type="ChEBI" id="CHEBI:30616"/>
    </ligand>
</feature>
<feature type="binding site" evidence="1">
    <location>
        <position position="314"/>
    </location>
    <ligand>
        <name>ATP</name>
        <dbReference type="ChEBI" id="CHEBI:30616"/>
    </ligand>
</feature>
<feature type="binding site" evidence="1">
    <location>
        <position position="411"/>
    </location>
    <ligand>
        <name>ADP</name>
        <dbReference type="ChEBI" id="CHEBI:456216"/>
    </ligand>
</feature>
<feature type="binding site" evidence="1">
    <location>
        <position position="411"/>
    </location>
    <ligand>
        <name>ATP</name>
        <dbReference type="ChEBI" id="CHEBI:30616"/>
    </ligand>
</feature>
<feature type="binding site" evidence="1">
    <location>
        <position position="415"/>
    </location>
    <ligand>
        <name>ADP</name>
        <dbReference type="ChEBI" id="CHEBI:456216"/>
    </ligand>
</feature>
<name>GLPK_PSETO</name>
<accession>O87924</accession>